<feature type="chain" id="PRO_1000190101" description="Thiosulfate sulfurtransferase GlpE">
    <location>
        <begin position="1"/>
        <end position="108"/>
    </location>
</feature>
<feature type="domain" description="Rhodanese" evidence="1">
    <location>
        <begin position="17"/>
        <end position="105"/>
    </location>
</feature>
<feature type="active site" description="Cysteine persulfide intermediate" evidence="1">
    <location>
        <position position="65"/>
    </location>
</feature>
<comment type="function">
    <text evidence="1">Transferase that catalyzes the transfer of sulfur from thiosulfate to thiophilic acceptors such as cyanide or dithiols. May function in a CysM-independent thiosulfate assimilation pathway by catalyzing the conversion of thiosulfate to sulfite, which can then be used for L-cysteine biosynthesis.</text>
</comment>
<comment type="catalytic activity">
    <reaction evidence="1">
        <text>thiosulfate + hydrogen cyanide = thiocyanate + sulfite + 2 H(+)</text>
        <dbReference type="Rhea" id="RHEA:16881"/>
        <dbReference type="ChEBI" id="CHEBI:15378"/>
        <dbReference type="ChEBI" id="CHEBI:17359"/>
        <dbReference type="ChEBI" id="CHEBI:18022"/>
        <dbReference type="ChEBI" id="CHEBI:18407"/>
        <dbReference type="ChEBI" id="CHEBI:33542"/>
        <dbReference type="EC" id="2.8.1.1"/>
    </reaction>
</comment>
<comment type="catalytic activity">
    <reaction evidence="1">
        <text>thiosulfate + [thioredoxin]-dithiol = [thioredoxin]-disulfide + hydrogen sulfide + sulfite + 2 H(+)</text>
        <dbReference type="Rhea" id="RHEA:83859"/>
        <dbReference type="Rhea" id="RHEA-COMP:10698"/>
        <dbReference type="Rhea" id="RHEA-COMP:10700"/>
        <dbReference type="ChEBI" id="CHEBI:15378"/>
        <dbReference type="ChEBI" id="CHEBI:17359"/>
        <dbReference type="ChEBI" id="CHEBI:29919"/>
        <dbReference type="ChEBI" id="CHEBI:29950"/>
        <dbReference type="ChEBI" id="CHEBI:33542"/>
        <dbReference type="ChEBI" id="CHEBI:50058"/>
    </reaction>
</comment>
<comment type="subcellular location">
    <subcellularLocation>
        <location evidence="1">Cytoplasm</location>
    </subcellularLocation>
</comment>
<comment type="similarity">
    <text evidence="1">Belongs to the GlpE family.</text>
</comment>
<reference key="1">
    <citation type="journal article" date="2008" name="J. Bacteriol.">
        <title>Complete genome sequence of uropathogenic Proteus mirabilis, a master of both adherence and motility.</title>
        <authorList>
            <person name="Pearson M.M."/>
            <person name="Sebaihia M."/>
            <person name="Churcher C."/>
            <person name="Quail M.A."/>
            <person name="Seshasayee A.S."/>
            <person name="Luscombe N.M."/>
            <person name="Abdellah Z."/>
            <person name="Arrosmith C."/>
            <person name="Atkin B."/>
            <person name="Chillingworth T."/>
            <person name="Hauser H."/>
            <person name="Jagels K."/>
            <person name="Moule S."/>
            <person name="Mungall K."/>
            <person name="Norbertczak H."/>
            <person name="Rabbinowitsch E."/>
            <person name="Walker D."/>
            <person name="Whithead S."/>
            <person name="Thomson N.R."/>
            <person name="Rather P.N."/>
            <person name="Parkhill J."/>
            <person name="Mobley H.L.T."/>
        </authorList>
    </citation>
    <scope>NUCLEOTIDE SEQUENCE [LARGE SCALE GENOMIC DNA]</scope>
    <source>
        <strain>HI4320</strain>
    </source>
</reference>
<evidence type="ECO:0000255" key="1">
    <source>
        <dbReference type="HAMAP-Rule" id="MF_01009"/>
    </source>
</evidence>
<keyword id="KW-0963">Cytoplasm</keyword>
<keyword id="KW-1185">Reference proteome</keyword>
<keyword id="KW-0808">Transferase</keyword>
<protein>
    <recommendedName>
        <fullName evidence="1">Thiosulfate sulfurtransferase GlpE</fullName>
        <ecNumber evidence="1">2.8.1.1</ecNumber>
    </recommendedName>
</protein>
<gene>
    <name evidence="1" type="primary">glpE</name>
    <name type="ordered locus">PMI2927</name>
</gene>
<dbReference type="EC" id="2.8.1.1" evidence="1"/>
<dbReference type="EMBL" id="AM942759">
    <property type="protein sequence ID" value="CAR45765.1"/>
    <property type="molecule type" value="Genomic_DNA"/>
</dbReference>
<dbReference type="RefSeq" id="WP_004249057.1">
    <property type="nucleotide sequence ID" value="NC_010554.1"/>
</dbReference>
<dbReference type="SMR" id="B4EZM9"/>
<dbReference type="EnsemblBacteria" id="CAR45765">
    <property type="protein sequence ID" value="CAR45765"/>
    <property type="gene ID" value="PMI2927"/>
</dbReference>
<dbReference type="GeneID" id="6802097"/>
<dbReference type="KEGG" id="pmr:PMI2927"/>
<dbReference type="eggNOG" id="COG0607">
    <property type="taxonomic scope" value="Bacteria"/>
</dbReference>
<dbReference type="HOGENOM" id="CLU_089574_14_0_6"/>
<dbReference type="Proteomes" id="UP000008319">
    <property type="component" value="Chromosome"/>
</dbReference>
<dbReference type="GO" id="GO:0005737">
    <property type="term" value="C:cytoplasm"/>
    <property type="evidence" value="ECO:0007669"/>
    <property type="project" value="UniProtKB-SubCell"/>
</dbReference>
<dbReference type="GO" id="GO:0004792">
    <property type="term" value="F:thiosulfate-cyanide sulfurtransferase activity"/>
    <property type="evidence" value="ECO:0007669"/>
    <property type="project" value="UniProtKB-UniRule"/>
</dbReference>
<dbReference type="GO" id="GO:0006071">
    <property type="term" value="P:glycerol metabolic process"/>
    <property type="evidence" value="ECO:0007669"/>
    <property type="project" value="UniProtKB-UniRule"/>
</dbReference>
<dbReference type="CDD" id="cd01444">
    <property type="entry name" value="GlpE_ST"/>
    <property type="match status" value="1"/>
</dbReference>
<dbReference type="Gene3D" id="3.40.250.10">
    <property type="entry name" value="Rhodanese-like domain"/>
    <property type="match status" value="1"/>
</dbReference>
<dbReference type="HAMAP" id="MF_01009">
    <property type="entry name" value="Thiosulf_sulfurtr"/>
    <property type="match status" value="1"/>
</dbReference>
<dbReference type="InterPro" id="IPR050229">
    <property type="entry name" value="GlpE_sulfurtransferase"/>
</dbReference>
<dbReference type="InterPro" id="IPR001763">
    <property type="entry name" value="Rhodanese-like_dom"/>
</dbReference>
<dbReference type="InterPro" id="IPR036873">
    <property type="entry name" value="Rhodanese-like_dom_sf"/>
</dbReference>
<dbReference type="InterPro" id="IPR023695">
    <property type="entry name" value="Thiosulf_sulfurTrfase"/>
</dbReference>
<dbReference type="NCBIfam" id="NF001195">
    <property type="entry name" value="PRK00162.1"/>
    <property type="match status" value="1"/>
</dbReference>
<dbReference type="PANTHER" id="PTHR43031">
    <property type="entry name" value="FAD-DEPENDENT OXIDOREDUCTASE"/>
    <property type="match status" value="1"/>
</dbReference>
<dbReference type="PANTHER" id="PTHR43031:SF6">
    <property type="entry name" value="THIOSULFATE SULFURTRANSFERASE GLPE"/>
    <property type="match status" value="1"/>
</dbReference>
<dbReference type="Pfam" id="PF00581">
    <property type="entry name" value="Rhodanese"/>
    <property type="match status" value="1"/>
</dbReference>
<dbReference type="SMART" id="SM00450">
    <property type="entry name" value="RHOD"/>
    <property type="match status" value="1"/>
</dbReference>
<dbReference type="SUPFAM" id="SSF52821">
    <property type="entry name" value="Rhodanese/Cell cycle control phosphatase"/>
    <property type="match status" value="1"/>
</dbReference>
<dbReference type="PROSITE" id="PS50206">
    <property type="entry name" value="RHODANESE_3"/>
    <property type="match status" value="1"/>
</dbReference>
<accession>B4EZM9</accession>
<name>GLPE_PROMH</name>
<organism>
    <name type="scientific">Proteus mirabilis (strain HI4320)</name>
    <dbReference type="NCBI Taxonomy" id="529507"/>
    <lineage>
        <taxon>Bacteria</taxon>
        <taxon>Pseudomonadati</taxon>
        <taxon>Pseudomonadota</taxon>
        <taxon>Gammaproteobacteria</taxon>
        <taxon>Enterobacterales</taxon>
        <taxon>Morganellaceae</taxon>
        <taxon>Proteus</taxon>
    </lineage>
</organism>
<sequence length="108" mass="12234">MDSFQFLSVEQAYQFWVSQSAILVDVRDPQSYRLGHATGAFHLTNDTLNQFLQDADFDVPVMVMCYHGHSSQGAAQYLVNMGFETVYSINGGFEAWLREFPQAITSLQ</sequence>
<proteinExistence type="inferred from homology"/>